<accession>P65248</accession>
<accession>Q99WC1</accession>
<comment type="function">
    <text evidence="1">Phosphorylation of dTMP to form dTDP in both de novo and salvage pathways of dTTP synthesis.</text>
</comment>
<comment type="catalytic activity">
    <reaction evidence="1">
        <text>dTMP + ATP = dTDP + ADP</text>
        <dbReference type="Rhea" id="RHEA:13517"/>
        <dbReference type="ChEBI" id="CHEBI:30616"/>
        <dbReference type="ChEBI" id="CHEBI:58369"/>
        <dbReference type="ChEBI" id="CHEBI:63528"/>
        <dbReference type="ChEBI" id="CHEBI:456216"/>
        <dbReference type="EC" id="2.7.4.9"/>
    </reaction>
</comment>
<comment type="similarity">
    <text evidence="1">Belongs to the thymidylate kinase family.</text>
</comment>
<evidence type="ECO:0000255" key="1">
    <source>
        <dbReference type="HAMAP-Rule" id="MF_00165"/>
    </source>
</evidence>
<evidence type="ECO:0007829" key="2">
    <source>
        <dbReference type="PDB" id="4DWJ"/>
    </source>
</evidence>
<evidence type="ECO:0007829" key="3">
    <source>
        <dbReference type="PDB" id="4EAQ"/>
    </source>
</evidence>
<evidence type="ECO:0007829" key="4">
    <source>
        <dbReference type="PDB" id="4MQB"/>
    </source>
</evidence>
<sequence>MSAFITFEGPEGSGKTTVINEVYHRLVKDYDVIMTREPGGVPTGEEIRKIVLEGNDMDIRTEAMLFAASRREHLVLKVIPALKEGKVVLCDRYIDSSLAYQGYARGIGVEEVRALNEFAINGLYPDLTIYLNVSAEVGRERIIKNSRDQNRLDQEDLKFHEKVIEGYQEIIHNESQRFKSVNADQPLENVVEDTYQTIIKYLEKI</sequence>
<protein>
    <recommendedName>
        <fullName evidence="1">Thymidylate kinase</fullName>
        <ecNumber evidence="1">2.7.4.9</ecNumber>
    </recommendedName>
    <alternativeName>
        <fullName evidence="1">dTMP kinase</fullName>
    </alternativeName>
</protein>
<dbReference type="EC" id="2.7.4.9" evidence="1"/>
<dbReference type="EMBL" id="BA000017">
    <property type="protein sequence ID" value="BAB56644.1"/>
    <property type="molecule type" value="Genomic_DNA"/>
</dbReference>
<dbReference type="RefSeq" id="WP_001272126.1">
    <property type="nucleotide sequence ID" value="NC_002758.2"/>
</dbReference>
<dbReference type="PDB" id="2CCG">
    <property type="method" value="X-ray"/>
    <property type="resolution" value="2.30 A"/>
    <property type="chains" value="A/B=1-205"/>
</dbReference>
<dbReference type="PDB" id="2CCJ">
    <property type="method" value="X-ray"/>
    <property type="resolution" value="1.70 A"/>
    <property type="chains" value="A/B=1-205"/>
</dbReference>
<dbReference type="PDB" id="2CCK">
    <property type="method" value="X-ray"/>
    <property type="resolution" value="2.21 A"/>
    <property type="chains" value="A/B=1-205"/>
</dbReference>
<dbReference type="PDB" id="4DWJ">
    <property type="method" value="X-ray"/>
    <property type="resolution" value="2.74 A"/>
    <property type="chains" value="A/B/C/D/E/F/G/H=1-205"/>
</dbReference>
<dbReference type="PDB" id="4EAQ">
    <property type="method" value="X-ray"/>
    <property type="resolution" value="1.85 A"/>
    <property type="chains" value="A/B=1-205"/>
</dbReference>
<dbReference type="PDB" id="4F4I">
    <property type="method" value="X-ray"/>
    <property type="resolution" value="2.45 A"/>
    <property type="chains" value="A/B=1-205"/>
</dbReference>
<dbReference type="PDB" id="4GFD">
    <property type="method" value="X-ray"/>
    <property type="resolution" value="1.80 A"/>
    <property type="chains" value="A/B=1-205"/>
</dbReference>
<dbReference type="PDB" id="4MQB">
    <property type="method" value="X-ray"/>
    <property type="resolution" value="1.55 A"/>
    <property type="chains" value="A/B=1-205"/>
</dbReference>
<dbReference type="PDBsum" id="2CCG"/>
<dbReference type="PDBsum" id="2CCJ"/>
<dbReference type="PDBsum" id="2CCK"/>
<dbReference type="PDBsum" id="4DWJ"/>
<dbReference type="PDBsum" id="4EAQ"/>
<dbReference type="PDBsum" id="4F4I"/>
<dbReference type="PDBsum" id="4GFD"/>
<dbReference type="PDBsum" id="4MQB"/>
<dbReference type="SMR" id="P65248"/>
<dbReference type="GeneID" id="98344796"/>
<dbReference type="KEGG" id="sav:SAV0482"/>
<dbReference type="HOGENOM" id="CLU_049131_0_2_9"/>
<dbReference type="PhylomeDB" id="P65248"/>
<dbReference type="EvolutionaryTrace" id="P65248"/>
<dbReference type="PRO" id="PR:P65248"/>
<dbReference type="Proteomes" id="UP000002481">
    <property type="component" value="Chromosome"/>
</dbReference>
<dbReference type="GO" id="GO:0005829">
    <property type="term" value="C:cytosol"/>
    <property type="evidence" value="ECO:0007669"/>
    <property type="project" value="TreeGrafter"/>
</dbReference>
<dbReference type="GO" id="GO:0005524">
    <property type="term" value="F:ATP binding"/>
    <property type="evidence" value="ECO:0007669"/>
    <property type="project" value="UniProtKB-UniRule"/>
</dbReference>
<dbReference type="GO" id="GO:0004798">
    <property type="term" value="F:dTMP kinase activity"/>
    <property type="evidence" value="ECO:0007669"/>
    <property type="project" value="UniProtKB-UniRule"/>
</dbReference>
<dbReference type="GO" id="GO:0006233">
    <property type="term" value="P:dTDP biosynthetic process"/>
    <property type="evidence" value="ECO:0007669"/>
    <property type="project" value="InterPro"/>
</dbReference>
<dbReference type="GO" id="GO:0006235">
    <property type="term" value="P:dTTP biosynthetic process"/>
    <property type="evidence" value="ECO:0007669"/>
    <property type="project" value="UniProtKB-UniRule"/>
</dbReference>
<dbReference type="GO" id="GO:0006227">
    <property type="term" value="P:dUDP biosynthetic process"/>
    <property type="evidence" value="ECO:0007669"/>
    <property type="project" value="TreeGrafter"/>
</dbReference>
<dbReference type="CDD" id="cd01672">
    <property type="entry name" value="TMPK"/>
    <property type="match status" value="1"/>
</dbReference>
<dbReference type="FunFam" id="3.40.50.300:FF:000225">
    <property type="entry name" value="Thymidylate kinase"/>
    <property type="match status" value="1"/>
</dbReference>
<dbReference type="Gene3D" id="3.40.50.300">
    <property type="entry name" value="P-loop containing nucleotide triphosphate hydrolases"/>
    <property type="match status" value="1"/>
</dbReference>
<dbReference type="HAMAP" id="MF_00165">
    <property type="entry name" value="Thymidylate_kinase"/>
    <property type="match status" value="1"/>
</dbReference>
<dbReference type="InterPro" id="IPR027417">
    <property type="entry name" value="P-loop_NTPase"/>
</dbReference>
<dbReference type="InterPro" id="IPR039430">
    <property type="entry name" value="Thymidylate_kin-like_dom"/>
</dbReference>
<dbReference type="InterPro" id="IPR018095">
    <property type="entry name" value="Thymidylate_kin_CS"/>
</dbReference>
<dbReference type="InterPro" id="IPR018094">
    <property type="entry name" value="Thymidylate_kinase"/>
</dbReference>
<dbReference type="NCBIfam" id="TIGR00041">
    <property type="entry name" value="DTMP_kinase"/>
    <property type="match status" value="1"/>
</dbReference>
<dbReference type="PANTHER" id="PTHR10344">
    <property type="entry name" value="THYMIDYLATE KINASE"/>
    <property type="match status" value="1"/>
</dbReference>
<dbReference type="PANTHER" id="PTHR10344:SF4">
    <property type="entry name" value="UMP-CMP KINASE 2, MITOCHONDRIAL"/>
    <property type="match status" value="1"/>
</dbReference>
<dbReference type="Pfam" id="PF02223">
    <property type="entry name" value="Thymidylate_kin"/>
    <property type="match status" value="1"/>
</dbReference>
<dbReference type="SUPFAM" id="SSF52540">
    <property type="entry name" value="P-loop containing nucleoside triphosphate hydrolases"/>
    <property type="match status" value="1"/>
</dbReference>
<dbReference type="PROSITE" id="PS01331">
    <property type="entry name" value="THYMIDYLATE_KINASE"/>
    <property type="match status" value="1"/>
</dbReference>
<gene>
    <name evidence="1" type="primary">tmk</name>
    <name type="ordered locus">SAV0482</name>
</gene>
<proteinExistence type="evidence at protein level"/>
<name>KTHY_STAAM</name>
<keyword id="KW-0002">3D-structure</keyword>
<keyword id="KW-0067">ATP-binding</keyword>
<keyword id="KW-0418">Kinase</keyword>
<keyword id="KW-0545">Nucleotide biosynthesis</keyword>
<keyword id="KW-0547">Nucleotide-binding</keyword>
<keyword id="KW-0808">Transferase</keyword>
<organism>
    <name type="scientific">Staphylococcus aureus (strain Mu50 / ATCC 700699)</name>
    <dbReference type="NCBI Taxonomy" id="158878"/>
    <lineage>
        <taxon>Bacteria</taxon>
        <taxon>Bacillati</taxon>
        <taxon>Bacillota</taxon>
        <taxon>Bacilli</taxon>
        <taxon>Bacillales</taxon>
        <taxon>Staphylococcaceae</taxon>
        <taxon>Staphylococcus</taxon>
    </lineage>
</organism>
<reference key="1">
    <citation type="journal article" date="2001" name="Lancet">
        <title>Whole genome sequencing of meticillin-resistant Staphylococcus aureus.</title>
        <authorList>
            <person name="Kuroda M."/>
            <person name="Ohta T."/>
            <person name="Uchiyama I."/>
            <person name="Baba T."/>
            <person name="Yuzawa H."/>
            <person name="Kobayashi I."/>
            <person name="Cui L."/>
            <person name="Oguchi A."/>
            <person name="Aoki K."/>
            <person name="Nagai Y."/>
            <person name="Lian J.-Q."/>
            <person name="Ito T."/>
            <person name="Kanamori M."/>
            <person name="Matsumaru H."/>
            <person name="Maruyama A."/>
            <person name="Murakami H."/>
            <person name="Hosoyama A."/>
            <person name="Mizutani-Ui Y."/>
            <person name="Takahashi N.K."/>
            <person name="Sawano T."/>
            <person name="Inoue R."/>
            <person name="Kaito C."/>
            <person name="Sekimizu K."/>
            <person name="Hirakawa H."/>
            <person name="Kuhara S."/>
            <person name="Goto S."/>
            <person name="Yabuzaki J."/>
            <person name="Kanehisa M."/>
            <person name="Yamashita A."/>
            <person name="Oshima K."/>
            <person name="Furuya K."/>
            <person name="Yoshino C."/>
            <person name="Shiba T."/>
            <person name="Hattori M."/>
            <person name="Ogasawara N."/>
            <person name="Hayashi H."/>
            <person name="Hiramatsu K."/>
        </authorList>
    </citation>
    <scope>NUCLEOTIDE SEQUENCE [LARGE SCALE GENOMIC DNA]</scope>
    <source>
        <strain>Mu50 / ATCC 700699</strain>
    </source>
</reference>
<feature type="chain" id="PRO_0000155339" description="Thymidylate kinase">
    <location>
        <begin position="1"/>
        <end position="205"/>
    </location>
</feature>
<feature type="binding site" evidence="1">
    <location>
        <begin position="9"/>
        <end position="16"/>
    </location>
    <ligand>
        <name>ATP</name>
        <dbReference type="ChEBI" id="CHEBI:30616"/>
    </ligand>
</feature>
<feature type="strand" evidence="4">
    <location>
        <begin position="3"/>
        <end position="8"/>
    </location>
</feature>
<feature type="helix" evidence="4">
    <location>
        <begin position="15"/>
        <end position="26"/>
    </location>
</feature>
<feature type="turn" evidence="4">
    <location>
        <begin position="27"/>
        <end position="29"/>
    </location>
</feature>
<feature type="strand" evidence="4">
    <location>
        <begin position="32"/>
        <end position="35"/>
    </location>
</feature>
<feature type="turn" evidence="4">
    <location>
        <begin position="37"/>
        <end position="40"/>
    </location>
</feature>
<feature type="helix" evidence="4">
    <location>
        <begin position="42"/>
        <end position="53"/>
    </location>
</feature>
<feature type="helix" evidence="4">
    <location>
        <begin position="59"/>
        <end position="76"/>
    </location>
</feature>
<feature type="helix" evidence="4">
    <location>
        <begin position="78"/>
        <end position="83"/>
    </location>
</feature>
<feature type="strand" evidence="4">
    <location>
        <begin position="87"/>
        <end position="92"/>
    </location>
</feature>
<feature type="helix" evidence="4">
    <location>
        <begin position="94"/>
        <end position="100"/>
    </location>
</feature>
<feature type="turn" evidence="4">
    <location>
        <begin position="101"/>
        <end position="105"/>
    </location>
</feature>
<feature type="helix" evidence="4">
    <location>
        <begin position="109"/>
        <end position="120"/>
    </location>
</feature>
<feature type="strand" evidence="4">
    <location>
        <begin position="126"/>
        <end position="132"/>
    </location>
</feature>
<feature type="helix" evidence="4">
    <location>
        <begin position="135"/>
        <end position="145"/>
    </location>
</feature>
<feature type="strand" evidence="2">
    <location>
        <begin position="146"/>
        <end position="148"/>
    </location>
</feature>
<feature type="helix" evidence="4">
    <location>
        <begin position="154"/>
        <end position="171"/>
    </location>
</feature>
<feature type="turn" evidence="3">
    <location>
        <begin position="175"/>
        <end position="177"/>
    </location>
</feature>
<feature type="strand" evidence="4">
    <location>
        <begin position="178"/>
        <end position="182"/>
    </location>
</feature>
<feature type="helix" evidence="4">
    <location>
        <begin position="187"/>
        <end position="203"/>
    </location>
</feature>